<sequence>MAQAAAAPADNTKKLWGGRFTGKTDPLMEKFNESLPFDKRLWAEDIKGSQAYAKALAKAGILAHDEAVTIVEGLAKVAEEWKAGAFVIKAGDEDIHTANERRLTELVGAVGGKLHTGRSRNDQVATDYRLWLVGQVEVMRSEVGELMRVAADRSEAEVEVLMPGFTHLQNAMTVRWSHWLMSHAAAWQRDDMRLRDLLPRVATLPLGSGALAGNPFLVDRQFIAKELGFGGGVCPNSMDAVSDRDFVIETVFAASLLCVHLSRWAEDLIIYSSGPFGYVQCSDAYATGSSLMPQKKNPDALELIRGKGGRVQGNLMGVMAVLKGTPTTYNKDFQECWELLFDTVDTVHDVVRIATGVLSTLRIKPDRMKAGLSADMLATDLAEYLVRKGVPFRETHHHSGAAVKMAEDRGCTLFDLTVDDLKTIHPLFTDDVAAVWDFNRSAEMRDTEGGTSKRSVLEQVQKMRTYLAAEGQH</sequence>
<keyword id="KW-0028">Amino-acid biosynthesis</keyword>
<keyword id="KW-0055">Arginine biosynthesis</keyword>
<keyword id="KW-0456">Lyase</keyword>
<comment type="catalytic activity">
    <reaction>
        <text>2-(N(omega)-L-arginino)succinate = fumarate + L-arginine</text>
        <dbReference type="Rhea" id="RHEA:24020"/>
        <dbReference type="ChEBI" id="CHEBI:29806"/>
        <dbReference type="ChEBI" id="CHEBI:32682"/>
        <dbReference type="ChEBI" id="CHEBI:57472"/>
        <dbReference type="EC" id="4.3.2.1"/>
    </reaction>
</comment>
<comment type="pathway">
    <text>Amino-acid biosynthesis; L-arginine biosynthesis; L-arginine from L-ornithine and carbamoyl phosphate: step 3/3.</text>
</comment>
<comment type="miscellaneous">
    <text>Often used in tagging mutagenesis schemes to generate new mutants.</text>
</comment>
<comment type="similarity">
    <text evidence="2">Belongs to the lyase 1 family. Argininosuccinate lyase subfamily.</text>
</comment>
<comment type="sequence caution" evidence="2">
    <conflict type="erroneous gene model prediction">
        <sequence resource="EMBL-CDS" id="CAA34615"/>
    </conflict>
</comment>
<organism>
    <name type="scientific">Chlamydomonas reinhardtii</name>
    <name type="common">Chlamydomonas smithii</name>
    <dbReference type="NCBI Taxonomy" id="3055"/>
    <lineage>
        <taxon>Eukaryota</taxon>
        <taxon>Viridiplantae</taxon>
        <taxon>Chlorophyta</taxon>
        <taxon>core chlorophytes</taxon>
        <taxon>Chlorophyceae</taxon>
        <taxon>CS clade</taxon>
        <taxon>Chlamydomonadales</taxon>
        <taxon>Chlamydomonadaceae</taxon>
        <taxon>Chlamydomonas</taxon>
    </lineage>
</organism>
<name>ARLY_CHLRE</name>
<dbReference type="EC" id="4.3.2.1"/>
<dbReference type="EMBL" id="AJ010110">
    <property type="protein sequence ID" value="CAA09001.1"/>
    <property type="molecule type" value="mRNA"/>
</dbReference>
<dbReference type="EMBL" id="X16619">
    <property type="protein sequence ID" value="CAA34615.1"/>
    <property type="status" value="ALT_SEQ"/>
    <property type="molecule type" value="Genomic_DNA"/>
</dbReference>
<dbReference type="SMR" id="P22675"/>
<dbReference type="PaxDb" id="3055-EDP09253"/>
<dbReference type="ProMEX" id="P22675"/>
<dbReference type="eggNOG" id="KOG1316">
    <property type="taxonomic scope" value="Eukaryota"/>
</dbReference>
<dbReference type="SABIO-RK" id="P22675"/>
<dbReference type="UniPathway" id="UPA00068">
    <property type="reaction ID" value="UER00114"/>
</dbReference>
<dbReference type="GO" id="GO:0004056">
    <property type="term" value="F:argininosuccinate lyase activity"/>
    <property type="evidence" value="ECO:0007669"/>
    <property type="project" value="UniProtKB-EC"/>
</dbReference>
<dbReference type="GO" id="GO:0042450">
    <property type="term" value="P:arginine biosynthetic process via ornithine"/>
    <property type="evidence" value="ECO:0007669"/>
    <property type="project" value="InterPro"/>
</dbReference>
<dbReference type="GO" id="GO:0006526">
    <property type="term" value="P:L-arginine biosynthetic process"/>
    <property type="evidence" value="ECO:0007669"/>
    <property type="project" value="UniProtKB-UniPathway"/>
</dbReference>
<dbReference type="CDD" id="cd01359">
    <property type="entry name" value="Argininosuccinate_lyase"/>
    <property type="match status" value="1"/>
</dbReference>
<dbReference type="FunFam" id="1.10.275.10:FF:000002">
    <property type="entry name" value="Argininosuccinate lyase"/>
    <property type="match status" value="1"/>
</dbReference>
<dbReference type="FunFam" id="1.10.40.30:FF:000001">
    <property type="entry name" value="Argininosuccinate lyase"/>
    <property type="match status" value="1"/>
</dbReference>
<dbReference type="FunFam" id="1.20.200.10:FF:000019">
    <property type="entry name" value="Argininosuccinate lyase chloroplastic"/>
    <property type="match status" value="1"/>
</dbReference>
<dbReference type="Gene3D" id="1.10.40.30">
    <property type="entry name" value="Fumarase/aspartase (C-terminal domain)"/>
    <property type="match status" value="1"/>
</dbReference>
<dbReference type="Gene3D" id="1.20.200.10">
    <property type="entry name" value="Fumarase/aspartase (Central domain)"/>
    <property type="match status" value="1"/>
</dbReference>
<dbReference type="Gene3D" id="1.10.275.10">
    <property type="entry name" value="Fumarase/aspartase (N-terminal domain)"/>
    <property type="match status" value="1"/>
</dbReference>
<dbReference type="HAMAP" id="MF_00006">
    <property type="entry name" value="Arg_succ_lyase"/>
    <property type="match status" value="1"/>
</dbReference>
<dbReference type="InterPro" id="IPR029419">
    <property type="entry name" value="Arg_succ_lyase_C"/>
</dbReference>
<dbReference type="InterPro" id="IPR009049">
    <property type="entry name" value="Argininosuccinate_lyase"/>
</dbReference>
<dbReference type="InterPro" id="IPR024083">
    <property type="entry name" value="Fumarase/histidase_N"/>
</dbReference>
<dbReference type="InterPro" id="IPR020557">
    <property type="entry name" value="Fumarate_lyase_CS"/>
</dbReference>
<dbReference type="InterPro" id="IPR000362">
    <property type="entry name" value="Fumarate_lyase_fam"/>
</dbReference>
<dbReference type="InterPro" id="IPR022761">
    <property type="entry name" value="Fumarate_lyase_N"/>
</dbReference>
<dbReference type="InterPro" id="IPR008948">
    <property type="entry name" value="L-Aspartase-like"/>
</dbReference>
<dbReference type="NCBIfam" id="TIGR00838">
    <property type="entry name" value="argH"/>
    <property type="match status" value="1"/>
</dbReference>
<dbReference type="PANTHER" id="PTHR43814">
    <property type="entry name" value="ARGININOSUCCINATE LYASE"/>
    <property type="match status" value="1"/>
</dbReference>
<dbReference type="PANTHER" id="PTHR43814:SF1">
    <property type="entry name" value="ARGININOSUCCINATE LYASE"/>
    <property type="match status" value="1"/>
</dbReference>
<dbReference type="Pfam" id="PF14698">
    <property type="entry name" value="ASL_C2"/>
    <property type="match status" value="1"/>
</dbReference>
<dbReference type="Pfam" id="PF00206">
    <property type="entry name" value="Lyase_1"/>
    <property type="match status" value="1"/>
</dbReference>
<dbReference type="PRINTS" id="PR00145">
    <property type="entry name" value="ARGSUCLYASE"/>
</dbReference>
<dbReference type="PRINTS" id="PR00149">
    <property type="entry name" value="FUMRATELYASE"/>
</dbReference>
<dbReference type="SUPFAM" id="SSF48557">
    <property type="entry name" value="L-aspartase-like"/>
    <property type="match status" value="1"/>
</dbReference>
<dbReference type="PROSITE" id="PS00163">
    <property type="entry name" value="FUMARATE_LYASES"/>
    <property type="match status" value="1"/>
</dbReference>
<evidence type="ECO:0000250" key="1">
    <source>
        <dbReference type="UniProtKB" id="P24058"/>
    </source>
</evidence>
<evidence type="ECO:0000305" key="2"/>
<reference key="1">
    <citation type="journal article" date="1995" name="Eur. J. Phycol.">
        <title>Characterisation of the ARG7 gene of Chlamydomonas reinhardtii and its application to nuclear transformation.</title>
        <authorList>
            <person name="Purton S."/>
            <person name="Rochaix J.-D."/>
        </authorList>
    </citation>
    <scope>NUCLEOTIDE SEQUENCE [GENOMIC DNA]</scope>
    <source>
        <strain>137c / CC-125</strain>
    </source>
</reference>
<reference key="2">
    <citation type="journal article" date="1999" name="Mol. Gen. Genet.">
        <title>The argininosuccinate lyase gene of Chlamydomonas reinhardtii: cloning of the cDNA and its characterization as a selectable shuttle marker.</title>
        <authorList>
            <person name="Auchincloss A.H."/>
            <person name="Loroch A.I."/>
            <person name="Rochaix J.-D."/>
        </authorList>
    </citation>
    <scope>NUCLEOTIDE SEQUENCE [MRNA]</scope>
    <source>
        <strain>137c / CC-125</strain>
    </source>
</reference>
<reference key="3">
    <citation type="journal article" date="1989" name="EMBO J.">
        <title>The argininosuccinate lyase gene of Chlamydomonas reinhardtii: an important tool for nuclear transformation and for correlating the genetic and molecular maps of the ARG7 locus.</title>
        <authorList>
            <person name="Debuchy R."/>
            <person name="Purton S."/>
            <person name="Rochaix J.-D."/>
        </authorList>
    </citation>
    <scope>NUCLEOTIDE SEQUENCE [GENOMIC DNA] OF 6-46; 77-121; 241-304 AND 372-398</scope>
    <source>
        <strain>137c / CC-125</strain>
    </source>
</reference>
<gene>
    <name type="primary">ARG7</name>
</gene>
<proteinExistence type="evidence at transcript level"/>
<accession>P22675</accession>
<accession>O81953</accession>
<feature type="chain" id="PRO_0000137723" description="Argininosuccinate lyase">
    <location>
        <begin position="1"/>
        <end position="473"/>
    </location>
</feature>
<feature type="active site" description="Proton acceptor" evidence="1">
    <location>
        <position position="167"/>
    </location>
</feature>
<feature type="active site" description="Proton donor" evidence="1">
    <location>
        <position position="289"/>
    </location>
</feature>
<feature type="binding site" description="in chain A" evidence="1">
    <location>
        <position position="34"/>
    </location>
    <ligand>
        <name>2-(N(omega)-L-arginino)succinate</name>
        <dbReference type="ChEBI" id="CHEBI:57472"/>
        <note>ligand shared between tetrameric partners</note>
    </ligand>
</feature>
<feature type="binding site" description="in chain A" evidence="1">
    <location>
        <position position="121"/>
    </location>
    <ligand>
        <name>2-(N(omega)-L-arginino)succinate</name>
        <dbReference type="ChEBI" id="CHEBI:57472"/>
        <note>ligand shared between tetrameric partners</note>
    </ligand>
</feature>
<feature type="binding site" description="in chain C" evidence="1">
    <location>
        <position position="166"/>
    </location>
    <ligand>
        <name>2-(N(omega)-L-arginino)succinate</name>
        <dbReference type="ChEBI" id="CHEBI:57472"/>
        <note>ligand shared between tetrameric partners</note>
    </ligand>
</feature>
<feature type="binding site" description="in chain B" evidence="1">
    <location>
        <position position="297"/>
    </location>
    <ligand>
        <name>2-(N(omega)-L-arginino)succinate</name>
        <dbReference type="ChEBI" id="CHEBI:57472"/>
        <note>ligand shared between tetrameric partners</note>
    </ligand>
</feature>
<feature type="binding site" description="in chain A" evidence="1">
    <location>
        <position position="329"/>
    </location>
    <ligand>
        <name>2-(N(omega)-L-arginino)succinate</name>
        <dbReference type="ChEBI" id="CHEBI:57472"/>
        <note>ligand shared between tetrameric partners</note>
    </ligand>
</feature>
<feature type="binding site" description="in chain A" evidence="1">
    <location>
        <position position="334"/>
    </location>
    <ligand>
        <name>2-(N(omega)-L-arginino)succinate</name>
        <dbReference type="ChEBI" id="CHEBI:57472"/>
        <note>ligand shared between tetrameric partners</note>
    </ligand>
</feature>
<feature type="site" description="Increases basicity of active site His" evidence="1">
    <location>
        <position position="302"/>
    </location>
</feature>
<protein>
    <recommendedName>
        <fullName>Argininosuccinate lyase</fullName>
        <shortName>ASAL</shortName>
        <ecNumber>4.3.2.1</ecNumber>
    </recommendedName>
    <alternativeName>
        <fullName>Arginosuccinase</fullName>
    </alternativeName>
</protein>